<keyword id="KW-1017">Isopeptide bond</keyword>
<keyword id="KW-0479">Metal-binding</keyword>
<keyword id="KW-0539">Nucleus</keyword>
<keyword id="KW-0597">Phosphoprotein</keyword>
<keyword id="KW-1267">Proteomics identification</keyword>
<keyword id="KW-1185">Reference proteome</keyword>
<keyword id="KW-0677">Repeat</keyword>
<keyword id="KW-0687">Ribonucleoprotein</keyword>
<keyword id="KW-0694">RNA-binding</keyword>
<keyword id="KW-0832">Ubl conjugation</keyword>
<keyword id="KW-0862">Zinc</keyword>
<keyword id="KW-0863">Zinc-finger</keyword>
<evidence type="ECO:0000250" key="1">
    <source>
        <dbReference type="UniProtKB" id="Q15696"/>
    </source>
</evidence>
<evidence type="ECO:0000255" key="2">
    <source>
        <dbReference type="PROSITE-ProRule" id="PRU00176"/>
    </source>
</evidence>
<evidence type="ECO:0000255" key="3">
    <source>
        <dbReference type="PROSITE-ProRule" id="PRU00723"/>
    </source>
</evidence>
<evidence type="ECO:0000256" key="4">
    <source>
        <dbReference type="SAM" id="MobiDB-lite"/>
    </source>
</evidence>
<evidence type="ECO:0000305" key="5"/>
<evidence type="ECO:0000312" key="6">
    <source>
        <dbReference type="HGNC" id="HGNC:12456"/>
    </source>
</evidence>
<proteinExistence type="evidence at protein level"/>
<feature type="chain" id="PRO_0000081999" description="U2 small nuclear ribonucleoprotein auxiliary factor 35 kDa subunit-related protein 1">
    <location>
        <begin position="1"/>
        <end position="479"/>
    </location>
</feature>
<feature type="domain" description="RRM" evidence="2">
    <location>
        <begin position="203"/>
        <end position="309"/>
    </location>
</feature>
<feature type="zinc finger region" description="C3H1-type 1" evidence="3">
    <location>
        <begin position="171"/>
        <end position="199"/>
    </location>
</feature>
<feature type="zinc finger region" description="C3H1-type 2" evidence="3">
    <location>
        <begin position="311"/>
        <end position="338"/>
    </location>
</feature>
<feature type="region of interest" description="Disordered" evidence="4">
    <location>
        <begin position="1"/>
        <end position="63"/>
    </location>
</feature>
<feature type="region of interest" description="Disordered" evidence="4">
    <location>
        <begin position="356"/>
        <end position="479"/>
    </location>
</feature>
<feature type="compositionally biased region" description="Basic residues" evidence="4">
    <location>
        <begin position="20"/>
        <end position="37"/>
    </location>
</feature>
<feature type="compositionally biased region" description="Acidic residues" evidence="4">
    <location>
        <begin position="50"/>
        <end position="63"/>
    </location>
</feature>
<feature type="compositionally biased region" description="Basic and acidic residues" evidence="4">
    <location>
        <begin position="365"/>
        <end position="379"/>
    </location>
</feature>
<feature type="compositionally biased region" description="Basic and acidic residues" evidence="4">
    <location>
        <begin position="388"/>
        <end position="403"/>
    </location>
</feature>
<feature type="compositionally biased region" description="Basic residues" evidence="4">
    <location>
        <begin position="404"/>
        <end position="417"/>
    </location>
</feature>
<feature type="compositionally biased region" description="Basic residues" evidence="4">
    <location>
        <begin position="442"/>
        <end position="451"/>
    </location>
</feature>
<feature type="modified residue" description="Phosphoserine" evidence="1">
    <location>
        <position position="354"/>
    </location>
</feature>
<feature type="modified residue" description="Phosphoserine" evidence="1">
    <location>
        <position position="389"/>
    </location>
</feature>
<feature type="cross-link" description="Glycyl lysine isopeptide (Lys-Gly) (interchain with G-Cter in SUMO2)" evidence="1">
    <location>
        <position position="67"/>
    </location>
</feature>
<feature type="sequence conflict" description="In Ref. 3; BAG36348." evidence="5" ref="3">
    <original>K</original>
    <variation>E</variation>
    <location>
        <position position="135"/>
    </location>
</feature>
<feature type="sequence conflict" description="In Ref. 3; BAG36348." evidence="5" ref="3">
    <original>K</original>
    <variation>R</variation>
    <location>
        <position position="195"/>
    </location>
</feature>
<organism>
    <name type="scientific">Homo sapiens</name>
    <name type="common">Human</name>
    <dbReference type="NCBI Taxonomy" id="9606"/>
    <lineage>
        <taxon>Eukaryota</taxon>
        <taxon>Metazoa</taxon>
        <taxon>Chordata</taxon>
        <taxon>Craniata</taxon>
        <taxon>Vertebrata</taxon>
        <taxon>Euteleostomi</taxon>
        <taxon>Mammalia</taxon>
        <taxon>Eutheria</taxon>
        <taxon>Euarchontoglires</taxon>
        <taxon>Primates</taxon>
        <taxon>Haplorrhini</taxon>
        <taxon>Catarrhini</taxon>
        <taxon>Hominidae</taxon>
        <taxon>Homo</taxon>
    </lineage>
</organism>
<name>U2AFL_HUMAN</name>
<protein>
    <recommendedName>
        <fullName evidence="5">U2 small nuclear ribonucleoprotein auxiliary factor 35 kDa subunit-related protein 1</fullName>
    </recommendedName>
    <alternativeName>
        <fullName>CCCH type zinc finger, RNA-binding motif and serine/arginine rich protein 1</fullName>
    </alternativeName>
    <alternativeName>
        <fullName>U2(RNU2) small nuclear RNA auxiliary factor 1-like 1</fullName>
    </alternativeName>
</protein>
<gene>
    <name evidence="6" type="primary">ZRSR2P1</name>
    <name type="synonym">U2AF1-RS1</name>
    <name type="synonym">U2AF1L1</name>
    <name type="synonym">U2AF1P</name>
    <name type="synonym">U2AF1RS1</name>
    <name type="synonym">U2AFBPL</name>
    <name type="synonym">ZRSR1</name>
</gene>
<reference key="1">
    <citation type="journal article" date="1995" name="Genomics">
        <title>Isolation and mapping of human homologues of an imprinted mouse gene U2af1-rs1.</title>
        <authorList>
            <person name="Kitagawa K."/>
            <person name="Wang X."/>
            <person name="Hatada I."/>
            <person name="Yamaoka T."/>
            <person name="Nojima H."/>
            <person name="Inazawa J."/>
            <person name="Abe T."/>
            <person name="Mitsuya K."/>
            <person name="Oshimura M."/>
            <person name="Murata A."/>
            <person name="Monden M."/>
            <person name="Mukai T."/>
        </authorList>
    </citation>
    <scope>NUCLEOTIDE SEQUENCE [MRNA]</scope>
    <source>
        <tissue>Brain</tissue>
    </source>
</reference>
<reference key="2">
    <citation type="journal article" date="1996" name="Biochem. Biophys. Res. Commun.">
        <title>Absence of imprinting in U2AFBPL, a human homologue of the imprinted mouse gene U2afbp-rs.</title>
        <authorList>
            <person name="Pearsall R.S."/>
            <person name="Shibata H."/>
            <person name="Brozowska A."/>
            <person name="Yoshino K."/>
            <person name="Okuda K."/>
            <person name="Dejong P.J."/>
            <person name="Plass C."/>
            <person name="Chapman V.M."/>
            <person name="Hayashizaki Y."/>
            <person name="Held W.A."/>
        </authorList>
    </citation>
    <scope>NUCLEOTIDE SEQUENCE [GENOMIC DNA]</scope>
</reference>
<reference key="3">
    <citation type="journal article" date="2004" name="Nat. Genet.">
        <title>Complete sequencing and characterization of 21,243 full-length human cDNAs.</title>
        <authorList>
            <person name="Ota T."/>
            <person name="Suzuki Y."/>
            <person name="Nishikawa T."/>
            <person name="Otsuki T."/>
            <person name="Sugiyama T."/>
            <person name="Irie R."/>
            <person name="Wakamatsu A."/>
            <person name="Hayashi K."/>
            <person name="Sato H."/>
            <person name="Nagai K."/>
            <person name="Kimura K."/>
            <person name="Makita H."/>
            <person name="Sekine M."/>
            <person name="Obayashi M."/>
            <person name="Nishi T."/>
            <person name="Shibahara T."/>
            <person name="Tanaka T."/>
            <person name="Ishii S."/>
            <person name="Yamamoto J."/>
            <person name="Saito K."/>
            <person name="Kawai Y."/>
            <person name="Isono Y."/>
            <person name="Nakamura Y."/>
            <person name="Nagahari K."/>
            <person name="Murakami K."/>
            <person name="Yasuda T."/>
            <person name="Iwayanagi T."/>
            <person name="Wagatsuma M."/>
            <person name="Shiratori A."/>
            <person name="Sudo H."/>
            <person name="Hosoiri T."/>
            <person name="Kaku Y."/>
            <person name="Kodaira H."/>
            <person name="Kondo H."/>
            <person name="Sugawara M."/>
            <person name="Takahashi M."/>
            <person name="Kanda K."/>
            <person name="Yokoi T."/>
            <person name="Furuya T."/>
            <person name="Kikkawa E."/>
            <person name="Omura Y."/>
            <person name="Abe K."/>
            <person name="Kamihara K."/>
            <person name="Katsuta N."/>
            <person name="Sato K."/>
            <person name="Tanikawa M."/>
            <person name="Yamazaki M."/>
            <person name="Ninomiya K."/>
            <person name="Ishibashi T."/>
            <person name="Yamashita H."/>
            <person name="Murakawa K."/>
            <person name="Fujimori K."/>
            <person name="Tanai H."/>
            <person name="Kimata M."/>
            <person name="Watanabe M."/>
            <person name="Hiraoka S."/>
            <person name="Chiba Y."/>
            <person name="Ishida S."/>
            <person name="Ono Y."/>
            <person name="Takiguchi S."/>
            <person name="Watanabe S."/>
            <person name="Yosida M."/>
            <person name="Hotuta T."/>
            <person name="Kusano J."/>
            <person name="Kanehori K."/>
            <person name="Takahashi-Fujii A."/>
            <person name="Hara H."/>
            <person name="Tanase T.-O."/>
            <person name="Nomura Y."/>
            <person name="Togiya S."/>
            <person name="Komai F."/>
            <person name="Hara R."/>
            <person name="Takeuchi K."/>
            <person name="Arita M."/>
            <person name="Imose N."/>
            <person name="Musashino K."/>
            <person name="Yuuki H."/>
            <person name="Oshima A."/>
            <person name="Sasaki N."/>
            <person name="Aotsuka S."/>
            <person name="Yoshikawa Y."/>
            <person name="Matsunawa H."/>
            <person name="Ichihara T."/>
            <person name="Shiohata N."/>
            <person name="Sano S."/>
            <person name="Moriya S."/>
            <person name="Momiyama H."/>
            <person name="Satoh N."/>
            <person name="Takami S."/>
            <person name="Terashima Y."/>
            <person name="Suzuki O."/>
            <person name="Nakagawa S."/>
            <person name="Senoh A."/>
            <person name="Mizoguchi H."/>
            <person name="Goto Y."/>
            <person name="Shimizu F."/>
            <person name="Wakebe H."/>
            <person name="Hishigaki H."/>
            <person name="Watanabe T."/>
            <person name="Sugiyama A."/>
            <person name="Takemoto M."/>
            <person name="Kawakami B."/>
            <person name="Yamazaki M."/>
            <person name="Watanabe K."/>
            <person name="Kumagai A."/>
            <person name="Itakura S."/>
            <person name="Fukuzumi Y."/>
            <person name="Fujimori Y."/>
            <person name="Komiyama M."/>
            <person name="Tashiro H."/>
            <person name="Tanigami A."/>
            <person name="Fujiwara T."/>
            <person name="Ono T."/>
            <person name="Yamada K."/>
            <person name="Fujii Y."/>
            <person name="Ozaki K."/>
            <person name="Hirao M."/>
            <person name="Ohmori Y."/>
            <person name="Kawabata A."/>
            <person name="Hikiji T."/>
            <person name="Kobatake N."/>
            <person name="Inagaki H."/>
            <person name="Ikema Y."/>
            <person name="Okamoto S."/>
            <person name="Okitani R."/>
            <person name="Kawakami T."/>
            <person name="Noguchi S."/>
            <person name="Itoh T."/>
            <person name="Shigeta K."/>
            <person name="Senba T."/>
            <person name="Matsumura K."/>
            <person name="Nakajima Y."/>
            <person name="Mizuno T."/>
            <person name="Morinaga M."/>
            <person name="Sasaki M."/>
            <person name="Togashi T."/>
            <person name="Oyama M."/>
            <person name="Hata H."/>
            <person name="Watanabe M."/>
            <person name="Komatsu T."/>
            <person name="Mizushima-Sugano J."/>
            <person name="Satoh T."/>
            <person name="Shirai Y."/>
            <person name="Takahashi Y."/>
            <person name="Nakagawa K."/>
            <person name="Okumura K."/>
            <person name="Nagase T."/>
            <person name="Nomura N."/>
            <person name="Kikuchi H."/>
            <person name="Masuho Y."/>
            <person name="Yamashita R."/>
            <person name="Nakai K."/>
            <person name="Yada T."/>
            <person name="Nakamura Y."/>
            <person name="Ohara O."/>
            <person name="Isogai T."/>
            <person name="Sugano S."/>
        </authorList>
    </citation>
    <scope>NUCLEOTIDE SEQUENCE [LARGE SCALE MRNA]</scope>
    <source>
        <tissue>Small intestine</tissue>
    </source>
</reference>
<reference key="4">
    <citation type="journal article" date="2004" name="Nature">
        <title>The DNA sequence and comparative analysis of human chromosome 5.</title>
        <authorList>
            <person name="Schmutz J."/>
            <person name="Martin J."/>
            <person name="Terry A."/>
            <person name="Couronne O."/>
            <person name="Grimwood J."/>
            <person name="Lowry S."/>
            <person name="Gordon L.A."/>
            <person name="Scott D."/>
            <person name="Xie G."/>
            <person name="Huang W."/>
            <person name="Hellsten U."/>
            <person name="Tran-Gyamfi M."/>
            <person name="She X."/>
            <person name="Prabhakar S."/>
            <person name="Aerts A."/>
            <person name="Altherr M."/>
            <person name="Bajorek E."/>
            <person name="Black S."/>
            <person name="Branscomb E."/>
            <person name="Caoile C."/>
            <person name="Challacombe J.F."/>
            <person name="Chan Y.M."/>
            <person name="Denys M."/>
            <person name="Detter J.C."/>
            <person name="Escobar J."/>
            <person name="Flowers D."/>
            <person name="Fotopulos D."/>
            <person name="Glavina T."/>
            <person name="Gomez M."/>
            <person name="Gonzales E."/>
            <person name="Goodstein D."/>
            <person name="Grigoriev I."/>
            <person name="Groza M."/>
            <person name="Hammon N."/>
            <person name="Hawkins T."/>
            <person name="Haydu L."/>
            <person name="Israni S."/>
            <person name="Jett J."/>
            <person name="Kadner K."/>
            <person name="Kimball H."/>
            <person name="Kobayashi A."/>
            <person name="Lopez F."/>
            <person name="Lou Y."/>
            <person name="Martinez D."/>
            <person name="Medina C."/>
            <person name="Morgan J."/>
            <person name="Nandkeshwar R."/>
            <person name="Noonan J.P."/>
            <person name="Pitluck S."/>
            <person name="Pollard M."/>
            <person name="Predki P."/>
            <person name="Priest J."/>
            <person name="Ramirez L."/>
            <person name="Retterer J."/>
            <person name="Rodriguez A."/>
            <person name="Rogers S."/>
            <person name="Salamov A."/>
            <person name="Salazar A."/>
            <person name="Thayer N."/>
            <person name="Tice H."/>
            <person name="Tsai M."/>
            <person name="Ustaszewska A."/>
            <person name="Vo N."/>
            <person name="Wheeler J."/>
            <person name="Wu K."/>
            <person name="Yang J."/>
            <person name="Dickson M."/>
            <person name="Cheng J.-F."/>
            <person name="Eichler E.E."/>
            <person name="Olsen A."/>
            <person name="Pennacchio L.A."/>
            <person name="Rokhsar D.S."/>
            <person name="Richardson P."/>
            <person name="Lucas S.M."/>
            <person name="Myers R.M."/>
            <person name="Rubin E.M."/>
        </authorList>
    </citation>
    <scope>NUCLEOTIDE SEQUENCE [LARGE SCALE GENOMIC DNA]</scope>
</reference>
<dbReference type="EMBL" id="D49676">
    <property type="protein sequence ID" value="BAA08532.1"/>
    <property type="molecule type" value="mRNA"/>
</dbReference>
<dbReference type="EMBL" id="U51224">
    <property type="protein sequence ID" value="AAA98669.1"/>
    <property type="molecule type" value="Genomic_DNA"/>
</dbReference>
<dbReference type="EMBL" id="AK313576">
    <property type="protein sequence ID" value="BAG36348.1"/>
    <property type="molecule type" value="mRNA"/>
</dbReference>
<dbReference type="EMBL" id="AC008536">
    <property type="status" value="NOT_ANNOTATED_CDS"/>
    <property type="molecule type" value="Genomic_DNA"/>
</dbReference>
<dbReference type="SMR" id="Q15695"/>
<dbReference type="FunCoup" id="Q15695">
    <property type="interactions" value="186"/>
</dbReference>
<dbReference type="IntAct" id="Q15695">
    <property type="interactions" value="9"/>
</dbReference>
<dbReference type="iPTMnet" id="Q15695"/>
<dbReference type="PhosphoSitePlus" id="Q15695"/>
<dbReference type="SwissPalm" id="Q15695"/>
<dbReference type="BioMuta" id="ZRSR1"/>
<dbReference type="DMDM" id="2833265"/>
<dbReference type="jPOST" id="Q15695"/>
<dbReference type="MassIVE" id="Q15695"/>
<dbReference type="PaxDb" id="9606-ENSP00000375133"/>
<dbReference type="ProteomicsDB" id="60703"/>
<dbReference type="Pumba" id="Q15695"/>
<dbReference type="UCSC" id="uc021ycm.2">
    <property type="organism name" value="human"/>
</dbReference>
<dbReference type="AGR" id="HGNC:12456"/>
<dbReference type="GeneCards" id="ZRSR2P1"/>
<dbReference type="HGNC" id="HGNC:12456">
    <property type="gene designation" value="ZRSR2P1"/>
</dbReference>
<dbReference type="MIM" id="601079">
    <property type="type" value="gene"/>
</dbReference>
<dbReference type="neXtProt" id="NX_Q15695"/>
<dbReference type="eggNOG" id="KOG2202">
    <property type="taxonomic scope" value="Eukaryota"/>
</dbReference>
<dbReference type="HOGENOM" id="CLU_029117_1_0_1"/>
<dbReference type="InParanoid" id="Q15695"/>
<dbReference type="PAN-GO" id="Q15695">
    <property type="GO annotations" value="4 GO annotations based on evolutionary models"/>
</dbReference>
<dbReference type="PhylomeDB" id="Q15695"/>
<dbReference type="TreeFam" id="TF324447"/>
<dbReference type="PathwayCommons" id="Q15695"/>
<dbReference type="Pharos" id="Q15695">
    <property type="development level" value="Tdark"/>
</dbReference>
<dbReference type="PRO" id="PR:Q15695"/>
<dbReference type="Proteomes" id="UP000005640">
    <property type="component" value="Unplaced"/>
</dbReference>
<dbReference type="RNAct" id="Q15695">
    <property type="molecule type" value="protein"/>
</dbReference>
<dbReference type="GO" id="GO:0005681">
    <property type="term" value="C:spliceosomal complex"/>
    <property type="evidence" value="ECO:0000318"/>
    <property type="project" value="GO_Central"/>
</dbReference>
<dbReference type="GO" id="GO:0089701">
    <property type="term" value="C:U2AF complex"/>
    <property type="evidence" value="ECO:0000318"/>
    <property type="project" value="GO_Central"/>
</dbReference>
<dbReference type="GO" id="GO:0030628">
    <property type="term" value="F:pre-mRNA 3'-splice site binding"/>
    <property type="evidence" value="ECO:0000318"/>
    <property type="project" value="GO_Central"/>
</dbReference>
<dbReference type="GO" id="GO:0008270">
    <property type="term" value="F:zinc ion binding"/>
    <property type="evidence" value="ECO:0007669"/>
    <property type="project" value="UniProtKB-KW"/>
</dbReference>
<dbReference type="GO" id="GO:0000398">
    <property type="term" value="P:mRNA splicing, via spliceosome"/>
    <property type="evidence" value="ECO:0000318"/>
    <property type="project" value="GO_Central"/>
</dbReference>
<dbReference type="CDD" id="cd12540">
    <property type="entry name" value="RRM_U2AFBPL"/>
    <property type="match status" value="1"/>
</dbReference>
<dbReference type="FunFam" id="3.30.70.330:FF:000209">
    <property type="entry name" value="U2 small nuclear ribonucleoprotein auxiliary factor 35 kDa subunit-related protein 2"/>
    <property type="match status" value="1"/>
</dbReference>
<dbReference type="Gene3D" id="3.30.70.330">
    <property type="match status" value="1"/>
</dbReference>
<dbReference type="InterPro" id="IPR012677">
    <property type="entry name" value="Nucleotide-bd_a/b_plait_sf"/>
</dbReference>
<dbReference type="InterPro" id="IPR035979">
    <property type="entry name" value="RBD_domain_sf"/>
</dbReference>
<dbReference type="InterPro" id="IPR000504">
    <property type="entry name" value="RRM_dom"/>
</dbReference>
<dbReference type="InterPro" id="IPR003954">
    <property type="entry name" value="RRM_dom_euk"/>
</dbReference>
<dbReference type="InterPro" id="IPR009145">
    <property type="entry name" value="U2AF_small"/>
</dbReference>
<dbReference type="InterPro" id="IPR000571">
    <property type="entry name" value="Znf_CCCH"/>
</dbReference>
<dbReference type="PANTHER" id="PTHR12620">
    <property type="entry name" value="U2 SNRNP AUXILIARY FACTOR, SMALL SUBUNIT"/>
    <property type="match status" value="1"/>
</dbReference>
<dbReference type="Pfam" id="PF00076">
    <property type="entry name" value="RRM_1"/>
    <property type="match status" value="1"/>
</dbReference>
<dbReference type="Pfam" id="PF00642">
    <property type="entry name" value="zf-CCCH"/>
    <property type="match status" value="1"/>
</dbReference>
<dbReference type="PRINTS" id="PR01848">
    <property type="entry name" value="U2AUXFACTOR"/>
</dbReference>
<dbReference type="SMART" id="SM00361">
    <property type="entry name" value="RRM_1"/>
    <property type="match status" value="1"/>
</dbReference>
<dbReference type="SMART" id="SM00356">
    <property type="entry name" value="ZnF_C3H1"/>
    <property type="match status" value="2"/>
</dbReference>
<dbReference type="SUPFAM" id="SSF54928">
    <property type="entry name" value="RNA-binding domain, RBD"/>
    <property type="match status" value="1"/>
</dbReference>
<dbReference type="PROSITE" id="PS50102">
    <property type="entry name" value="RRM"/>
    <property type="match status" value="1"/>
</dbReference>
<dbReference type="PROSITE" id="PS50103">
    <property type="entry name" value="ZF_C3H1"/>
    <property type="match status" value="2"/>
</dbReference>
<sequence>MAALEKMTFPKKMTFPEKPSHKKYRAALKKEKRKKRRQELARLRDSGLSQEEEEDTFIEEQQLEEEKLLERERERLHEEWLLREQKAQEEFRIKKEKEEAAKKWLEEQERKLKEQWKEQQRKEREEEEQKQQEKKEKEEAVQKMLDQAENDLENSTTWQNPEPPVDFRVMEKDRANCPFYSKTGACRFGDRCSRKHNFPTSSPTLLIKSMFTTFGMEQCRRDDYDPDASLEYSEEETYQQFLDFYEDVLPEFKNVGKVIQFKVSCNLEPHLRGNVYVQYQSEEECQAALSLFNGRWYAGRQLQCEFCPVTRWKMAICGLFEIQQCPRGKHCNFLHVFRNPNNEFWEANRDIYLSSDQTGSSFGKNSERREKMGHHDHYYSRQRGRRNPSPDHTYKRNGESERKKSSHRGKKSHKRTSKSRERHNSPSRGRNRHRSWDQGRRSQSRRSHRSRSQSSSRCRSRGRRKSGNRDRTVQSPQSK</sequence>
<accession>Q15695</accession>
<accession>B2R901</accession>
<accession>Q13570</accession>
<accession>Q2M3R8</accession>
<comment type="interaction">
    <interactant intactId="EBI-12270264">
        <id>Q15695</id>
    </interactant>
    <interactant intactId="EBI-10975473">
        <id>O60333-2</id>
        <label>KIF1B</label>
    </interactant>
    <organismsDiffer>false</organismsDiffer>
    <experiments>3</experiments>
</comment>
<comment type="interaction">
    <interactant intactId="EBI-12270264">
        <id>Q15695</id>
    </interactant>
    <interactant intactId="EBI-1048159">
        <id>P55081</id>
        <label>MFAP1</label>
    </interactant>
    <organismsDiffer>false</organismsDiffer>
    <experiments>3</experiments>
</comment>
<comment type="interaction">
    <interactant intactId="EBI-12270264">
        <id>Q15695</id>
    </interactant>
    <interactant intactId="EBI-12048237">
        <id>Q6BDI9</id>
        <label>REP15</label>
    </interactant>
    <organismsDiffer>false</organismsDiffer>
    <experiments>5</experiments>
</comment>
<comment type="interaction">
    <interactant intactId="EBI-12270264">
        <id>Q15695</id>
    </interactant>
    <interactant intactId="EBI-3867173">
        <id>A7MD48</id>
        <label>SRRM4</label>
    </interactant>
    <organismsDiffer>false</organismsDiffer>
    <experiments>3</experiments>
</comment>
<comment type="interaction">
    <interactant intactId="EBI-12270264">
        <id>Q15695</id>
    </interactant>
    <interactant intactId="EBI-11097439">
        <id>P26368-2</id>
        <label>U2AF2</label>
    </interactant>
    <organismsDiffer>false</organismsDiffer>
    <experiments>3</experiments>
</comment>
<comment type="interaction">
    <interactant intactId="EBI-12270264">
        <id>Q15695</id>
    </interactant>
    <interactant intactId="EBI-6657923">
        <id>Q15696</id>
        <label>ZRSR2</label>
    </interactant>
    <organismsDiffer>false</organismsDiffer>
    <experiments>6</experiments>
</comment>
<comment type="subcellular location">
    <subcellularLocation>
        <location evidence="5">Nucleus</location>
    </subcellularLocation>
</comment>
<comment type="caution">
    <text evidence="5">Defined as a pseudogene by HGNC. However, proteomics data suggest the existence of the protein. Appears to have arisen by retrotransposition of ZRSR2. It is uncertain if ZRSR2P1 is the ortholog of mouse ZRSR1, synteny is not conserved.</text>
</comment>